<organism>
    <name type="scientific">Homo sapiens</name>
    <name type="common">Human</name>
    <dbReference type="NCBI Taxonomy" id="9606"/>
    <lineage>
        <taxon>Eukaryota</taxon>
        <taxon>Metazoa</taxon>
        <taxon>Chordata</taxon>
        <taxon>Craniata</taxon>
        <taxon>Vertebrata</taxon>
        <taxon>Euteleostomi</taxon>
        <taxon>Mammalia</taxon>
        <taxon>Eutheria</taxon>
        <taxon>Euarchontoglires</taxon>
        <taxon>Primates</taxon>
        <taxon>Haplorrhini</taxon>
        <taxon>Catarrhini</taxon>
        <taxon>Hominidae</taxon>
        <taxon>Homo</taxon>
    </lineage>
</organism>
<gene>
    <name type="primary">CAMK2D</name>
    <name type="synonym">CAMKD</name>
</gene>
<protein>
    <recommendedName>
        <fullName>Calcium/calmodulin-dependent protein kinase type II subunit delta</fullName>
        <shortName>CaM kinase II subunit delta</shortName>
        <shortName>CaMK-II subunit delta</shortName>
        <ecNumber>2.7.11.17</ecNumber>
    </recommendedName>
</protein>
<accession>Q13557</accession>
<accession>A8MVS8</accession>
<accession>Q52PK4</accession>
<accession>Q59G21</accession>
<accession>Q8N553</accession>
<accession>Q9UGH6</accession>
<accession>Q9UQE9</accession>
<comment type="function">
    <text evidence="2 7 8">Calcium/calmodulin-dependent protein kinase involved in the regulation of Ca(2+) homeostatis and excitation-contraction coupling (ECC) in heart by targeting ion channels, transporters and accessory proteins involved in Ca(2+) influx into the myocyte, Ca(2+) release from the sarcoplasmic reticulum (SR), SR Ca(2+) uptake and Na(+) and K(+) channel transport. Targets also transcription factors and signaling molecules to regulate heart function. In its activated form, is involved in the pathogenesis of dilated cardiomyopathy and heart failure. Contributes to cardiac decompensation and heart failure by regulating SR Ca(2+) release via direct phosphorylation of RYR2 Ca(2+) channel on 'Ser-2808'. In the nucleus, phosphorylates the MEF2 repressor HDAC4, promoting its nuclear export and binding to 14-3-3 protein, and expression of MEF2 and genes involved in the hypertrophic program (PubMed:17179159). Is essential for left ventricular remodeling responses to myocardial infarction. In pathological myocardial remodeling acts downstream of the beta adrenergic receptor signaling cascade to regulate key proteins involved in ECC. Regulates Ca(2+) influx to myocytes by binding and phosphorylating the L-type Ca(2+) channel subunit beta-2 CACNB2. In addition to Ca(2+) channels, can target and regulate the cardiac sarcolemmal Na(+) channel Nav1.5/SCN5A and the K+ channel Kv4.3/KCND3, which contribute to arrhythmogenesis in heart failure. Phosphorylates phospholamban (PLN/PLB), an endogenous inhibitor of SERCA2A/ATP2A2, contributing to the enhancement of SR Ca(2+) uptake that may be important in frequency-dependent acceleration of relaxation (FDAR) and maintenance of contractile function during acidosis (PubMed:16690701). May participate in the modulation of skeletal muscle function in response to exercise, by regulating SR Ca(2+) transport through phosphorylation of PLN/PLB and triadin, a ryanodine receptor-coupling factor. In response to interferon-gamma (IFN-gamma) stimulation, catalyzes phosphorylation of STAT1, stimulating the JAK-STAT signaling pathway (By similarity).</text>
</comment>
<comment type="catalytic activity">
    <reaction>
        <text>L-seryl-[protein] + ATP = O-phospho-L-seryl-[protein] + ADP + H(+)</text>
        <dbReference type="Rhea" id="RHEA:17989"/>
        <dbReference type="Rhea" id="RHEA-COMP:9863"/>
        <dbReference type="Rhea" id="RHEA-COMP:11604"/>
        <dbReference type="ChEBI" id="CHEBI:15378"/>
        <dbReference type="ChEBI" id="CHEBI:29999"/>
        <dbReference type="ChEBI" id="CHEBI:30616"/>
        <dbReference type="ChEBI" id="CHEBI:83421"/>
        <dbReference type="ChEBI" id="CHEBI:456216"/>
        <dbReference type="EC" id="2.7.11.17"/>
    </reaction>
</comment>
<comment type="catalytic activity">
    <reaction>
        <text>L-threonyl-[protein] + ATP = O-phospho-L-threonyl-[protein] + ADP + H(+)</text>
        <dbReference type="Rhea" id="RHEA:46608"/>
        <dbReference type="Rhea" id="RHEA-COMP:11060"/>
        <dbReference type="Rhea" id="RHEA-COMP:11605"/>
        <dbReference type="ChEBI" id="CHEBI:15378"/>
        <dbReference type="ChEBI" id="CHEBI:30013"/>
        <dbReference type="ChEBI" id="CHEBI:30616"/>
        <dbReference type="ChEBI" id="CHEBI:61977"/>
        <dbReference type="ChEBI" id="CHEBI:456216"/>
        <dbReference type="EC" id="2.7.11.17"/>
    </reaction>
</comment>
<comment type="activity regulation">
    <text evidence="6">Activated by Ca(2+)/calmodulin. Binding of calmodulin results in conformational change that relieves intrasteric autoinhibition and allows autophosphorylation of Thr-287 which turns the kinase in a constitutively active form and confers to the kinase a Ca(2+)-independent activity.</text>
</comment>
<comment type="subunit">
    <text evidence="1 6">CAMK2 is composed of 4 different chains: alpha (CAMK2A), beta (CAMK2B), gamma (CAMK2G), and delta (CAMK2D). The different isoforms assemble into homo- or heteromultimeric holoenzymes composed of 12 subunits with two hexameric rings stacked one on top of the other (PubMed:14722083). Interacts with RRAD and CACNB2 (By similarity).</text>
</comment>
<comment type="interaction">
    <interactant intactId="EBI-351018">
        <id>Q13557</id>
    </interactant>
    <interactant intactId="EBI-744695">
        <id>Q8N9N5</id>
        <label>BANP</label>
    </interactant>
    <organismsDiffer>false</organismsDiffer>
    <experiments>4</experiments>
</comment>
<comment type="interaction">
    <interactant intactId="EBI-351018">
        <id>Q13557</id>
    </interactant>
    <interactant intactId="EBI-397435">
        <id>P62158</id>
        <label>CALM3</label>
    </interactant>
    <organismsDiffer>false</organismsDiffer>
    <experiments>6</experiments>
</comment>
<comment type="interaction">
    <interactant intactId="EBI-351018">
        <id>Q13557</id>
    </interactant>
    <interactant intactId="EBI-1383687">
        <id>Q9UQM7</id>
        <label>CAMK2A</label>
    </interactant>
    <organismsDiffer>false</organismsDiffer>
    <experiments>8</experiments>
</comment>
<comment type="interaction">
    <interactant intactId="EBI-351018">
        <id>Q13557</id>
    </interactant>
    <interactant intactId="EBI-1058722">
        <id>Q13554</id>
        <label>CAMK2B</label>
    </interactant>
    <organismsDiffer>false</organismsDiffer>
    <experiments>5</experiments>
</comment>
<comment type="interaction">
    <interactant intactId="EBI-351018">
        <id>Q13557</id>
    </interactant>
    <interactant intactId="EBI-351018">
        <id>Q13557</id>
        <label>CAMK2D</label>
    </interactant>
    <organismsDiffer>false</organismsDiffer>
    <experiments>5</experiments>
</comment>
<comment type="interaction">
    <interactant intactId="EBI-351018">
        <id>Q13557</id>
    </interactant>
    <interactant intactId="EBI-1383465">
        <id>Q13555</id>
        <label>CAMK2G</label>
    </interactant>
    <organismsDiffer>false</organismsDiffer>
    <experiments>6</experiments>
</comment>
<comment type="interaction">
    <interactant intactId="EBI-351018">
        <id>Q13557</id>
    </interactant>
    <interactant intactId="EBI-742362">
        <id>O96015</id>
        <label>DNAL4</label>
    </interactant>
    <organismsDiffer>false</organismsDiffer>
    <experiments>5</experiments>
</comment>
<comment type="interaction">
    <interactant intactId="EBI-351018">
        <id>Q13557</id>
    </interactant>
    <interactant intactId="EBI-10244652">
        <id>Q5JZY3-3</id>
        <label>EPHA10</label>
    </interactant>
    <organismsDiffer>false</organismsDiffer>
    <experiments>3</experiments>
</comment>
<comment type="interaction">
    <interactant intactId="EBI-351018">
        <id>Q13557</id>
    </interactant>
    <interactant intactId="EBI-6693977">
        <id>P68106</id>
        <label>FKBP1B</label>
    </interactant>
    <organismsDiffer>false</organismsDiffer>
    <experiments>3</experiments>
</comment>
<comment type="interaction">
    <interactant intactId="EBI-351018">
        <id>Q13557</id>
    </interactant>
    <interactant intactId="EBI-10242151">
        <id>Q53EP0-3</id>
        <label>FNDC3B</label>
    </interactant>
    <organismsDiffer>false</organismsDiffer>
    <experiments>3</experiments>
</comment>
<comment type="interaction">
    <interactant intactId="EBI-351018">
        <id>Q13557</id>
    </interactant>
    <interactant intactId="EBI-740459">
        <id>P51116</id>
        <label>FXR2</label>
    </interactant>
    <organismsDiffer>false</organismsDiffer>
    <experiments>3</experiments>
</comment>
<comment type="interaction">
    <interactant intactId="EBI-351018">
        <id>Q13557</id>
    </interactant>
    <interactant intactId="EBI-739825">
        <id>Q96BY2</id>
        <label>MOAP1</label>
    </interactant>
    <organismsDiffer>false</organismsDiffer>
    <experiments>3</experiments>
</comment>
<comment type="interaction">
    <interactant intactId="EBI-351018">
        <id>Q13557</id>
    </interactant>
    <interactant intactId="EBI-5453723">
        <id>Q9Y3B7</id>
        <label>MRPL11</label>
    </interactant>
    <organismsDiffer>false</organismsDiffer>
    <experiments>5</experiments>
</comment>
<comment type="interaction">
    <interactant intactId="EBI-351018">
        <id>Q13557</id>
    </interactant>
    <interactant intactId="EBI-947779">
        <id>Q96PM5</id>
        <label>RCHY1</label>
    </interactant>
    <organismsDiffer>false</organismsDiffer>
    <experiments>2</experiments>
</comment>
<comment type="interaction">
    <interactant intactId="EBI-351018">
        <id>Q13557</id>
    </interactant>
    <interactant intactId="EBI-726858">
        <id>Q14524</id>
        <label>SCN5A</label>
    </interactant>
    <organismsDiffer>false</organismsDiffer>
    <experiments>16</experiments>
</comment>
<comment type="interaction">
    <interactant intactId="EBI-351018">
        <id>Q13557</id>
    </interactant>
    <interactant intactId="EBI-431907">
        <id>O14787</id>
        <label>TNPO2</label>
    </interactant>
    <organismsDiffer>false</organismsDiffer>
    <experiments>4</experiments>
</comment>
<comment type="interaction">
    <interactant intactId="EBI-351018">
        <id>Q13557</id>
    </interactant>
    <interactant intactId="EBI-9526213">
        <id>Q8N0Z6</id>
        <label>TTC5</label>
    </interactant>
    <organismsDiffer>false</organismsDiffer>
    <experiments>4</experiments>
</comment>
<comment type="interaction">
    <interactant intactId="EBI-351018">
        <id>Q13557</id>
    </interactant>
    <interactant intactId="EBI-356498">
        <id>P62258</id>
        <label>YWHAE</label>
    </interactant>
    <organismsDiffer>false</organismsDiffer>
    <experiments>2</experiments>
</comment>
<comment type="interaction">
    <interactant intactId="EBI-351018">
        <id>Q13557</id>
    </interactant>
    <interactant intactId="EBI-10148373">
        <id>P61014</id>
        <label>Pln</label>
    </interactant>
    <organismsDiffer>true</organismsDiffer>
    <experiments>2</experiments>
</comment>
<comment type="interaction">
    <interactant intactId="EBI-351018">
        <id>Q13557</id>
    </interactant>
    <interactant intactId="EBI-25474079">
        <id>PRO_0000037311</id>
        <label>rep</label>
        <dbReference type="UniProtKB" id="P0C6X7"/>
    </interactant>
    <organismsDiffer>true</organismsDiffer>
    <experiments>4</experiments>
</comment>
<comment type="interaction">
    <interactant intactId="EBI-11534483">
        <id>Q13557-8</id>
    </interactant>
    <interactant intactId="EBI-1383687">
        <id>Q9UQM7</id>
        <label>CAMK2A</label>
    </interactant>
    <organismsDiffer>false</organismsDiffer>
    <experiments>3</experiments>
</comment>
<comment type="interaction">
    <interactant intactId="EBI-11534483">
        <id>Q13557-8</id>
    </interactant>
    <interactant intactId="EBI-11523526">
        <id>Q13554-3</id>
        <label>CAMK2B</label>
    </interactant>
    <organismsDiffer>false</organismsDiffer>
    <experiments>4</experiments>
</comment>
<comment type="interaction">
    <interactant intactId="EBI-11534483">
        <id>Q13557-8</id>
    </interactant>
    <interactant intactId="EBI-12020154">
        <id>Q13555-5</id>
        <label>CAMK2G</label>
    </interactant>
    <organismsDiffer>false</organismsDiffer>
    <experiments>3</experiments>
</comment>
<comment type="interaction">
    <interactant intactId="EBI-11534483">
        <id>Q13557-8</id>
    </interactant>
    <interactant intactId="EBI-16440910">
        <id>A0A0S2Z3P2</id>
        <label>ERCC8</label>
    </interactant>
    <organismsDiffer>false</organismsDiffer>
    <experiments>3</experiments>
</comment>
<comment type="interaction">
    <interactant intactId="EBI-11534483">
        <id>Q13557-8</id>
    </interactant>
    <interactant intactId="EBI-2340927">
        <id>P78317</id>
        <label>RNF4</label>
    </interactant>
    <organismsDiffer>false</organismsDiffer>
    <experiments>3</experiments>
</comment>
<comment type="interaction">
    <interactant intactId="EBI-11534483">
        <id>Q13557-8</id>
    </interactant>
    <interactant intactId="EBI-1042571">
        <id>Q9Y5L0</id>
        <label>TNPO3</label>
    </interactant>
    <organismsDiffer>false</organismsDiffer>
    <experiments>3</experiments>
</comment>
<comment type="interaction">
    <interactant intactId="EBI-11534483">
        <id>Q13557-8</id>
    </interactant>
    <interactant intactId="EBI-9526213">
        <id>Q8N0Z6</id>
        <label>TTC5</label>
    </interactant>
    <organismsDiffer>false</organismsDiffer>
    <experiments>3</experiments>
</comment>
<comment type="interaction">
    <interactant intactId="EBI-11534483">
        <id>Q13557-8</id>
    </interactant>
    <interactant intactId="EBI-10180829">
        <id>Q7KZS0</id>
        <label>UBE2I</label>
    </interactant>
    <organismsDiffer>false</organismsDiffer>
    <experiments>3</experiments>
</comment>
<comment type="subcellular location">
    <subcellularLocation>
        <location evidence="14">Cell membrane</location>
        <location evidence="14">Sarcolemma</location>
        <topology evidence="14">Peripheral membrane protein</topology>
        <orientation evidence="14">Cytoplasmic side</orientation>
    </subcellularLocation>
    <subcellularLocation>
        <location evidence="14">Sarcoplasmic reticulum membrane</location>
        <topology evidence="14">Peripheral membrane protein</topology>
        <orientation evidence="14">Cytoplasmic side</orientation>
    </subcellularLocation>
</comment>
<comment type="alternative products">
    <event type="alternative splicing"/>
    <isoform>
        <id>Q13557-1</id>
        <name>Delta 2</name>
        <sequence type="displayed"/>
    </isoform>
    <isoform>
        <id>Q13557-3</id>
        <name>Delta 3</name>
        <sequence type="described" ref="VSP_023096"/>
    </isoform>
    <isoform>
        <id>Q13557-4</id>
        <name>Delta 4</name>
        <sequence type="described" ref="VSP_023097"/>
    </isoform>
    <isoform>
        <id>Q13557-8</id>
        <name>Delta 6</name>
        <sequence type="described" ref="VSP_023099"/>
    </isoform>
    <isoform>
        <id>Q13557-9</id>
        <name>Delta 7</name>
        <sequence type="described" ref="VSP_023096 VSP_023099"/>
    </isoform>
    <isoform>
        <id>Q13557-5</id>
        <name>Delta 8</name>
        <sequence type="described" ref="VSP_023097 VSP_023099"/>
    </isoform>
    <isoform>
        <id>Q13557-6</id>
        <name>Delta 9</name>
        <sequence type="described" ref="VSP_023098"/>
    </isoform>
    <isoform>
        <id>Q13557-10</id>
        <name>Delta 10</name>
        <sequence type="described" ref="VSP_023098 VSP_023099"/>
    </isoform>
    <isoform>
        <id>Q13557-11</id>
        <name>Delta 11</name>
        <sequence type="described" ref="VSP_023095"/>
    </isoform>
    <isoform>
        <id>Q13557-12</id>
        <name>Delta 12</name>
        <sequence type="described" ref="VSP_041820 VSP_023099"/>
    </isoform>
</comment>
<comment type="tissue specificity">
    <text evidence="5 7">Expressed in cardiac muscle and skeletal muscle. Isoform Delta 3, isoform Delta 2, isoform Delta 8 and isoform Delta 9 are expressed in cardiac muscle. Isoform Delta 11 is expressed in skeletal muscle.</text>
</comment>
<comment type="induction">
    <text evidence="7">Activity is induced in skeletal muscle during exercise.</text>
</comment>
<comment type="domain">
    <text>The CAMK2 protein kinases contain a unique C-terminal subunit association domain responsible for oligomerization.</text>
</comment>
<comment type="PTM">
    <text evidence="7">Autophosphorylation of Thr-287 following activation by Ca(2+)/calmodulin. Phosphorylation of Thr-287 locks the kinase into an activated state.</text>
</comment>
<comment type="miscellaneous">
    <text>Expression of CAMK2D is significantly increased in patients suffering from dilated cardiomyopathy in PubMed:10189359.</text>
</comment>
<comment type="similarity">
    <text evidence="14">Belongs to the protein kinase superfamily. CAMK Ser/Thr protein kinase family. CaMK subfamily.</text>
</comment>
<comment type="sequence caution" evidence="14">
    <conflict type="erroneous initiation">
        <sequence resource="EMBL-CDS" id="BAD92525"/>
    </conflict>
    <text>Extended N-terminus.</text>
</comment>
<reference key="1">
    <citation type="journal article" date="1999" name="Circ. Res.">
        <title>Identification and expression of delta-isoforms of the multifunctional Ca2+/calmodulin-dependent protein kinase in failing and nonfailing human myocardium.</title>
        <authorList>
            <person name="Hoch B."/>
            <person name="Meyer R."/>
            <person name="Hetzer R."/>
            <person name="Krause E.-G."/>
            <person name="Karczewski P."/>
        </authorList>
    </citation>
    <scope>NUCLEOTIDE SEQUENCE [MRNA] (ISOFORM DELTA 2)</scope>
    <scope>ALTERNATIVE SPLICING</scope>
    <scope>TISSUE SPECIFICITY</scope>
    <source>
        <tissue>Myocardium</tissue>
    </source>
</reference>
<reference key="2">
    <citation type="journal article" date="2004" name="Nat. Genet.">
        <title>Complete sequencing and characterization of 21,243 full-length human cDNAs.</title>
        <authorList>
            <person name="Ota T."/>
            <person name="Suzuki Y."/>
            <person name="Nishikawa T."/>
            <person name="Otsuki T."/>
            <person name="Sugiyama T."/>
            <person name="Irie R."/>
            <person name="Wakamatsu A."/>
            <person name="Hayashi K."/>
            <person name="Sato H."/>
            <person name="Nagai K."/>
            <person name="Kimura K."/>
            <person name="Makita H."/>
            <person name="Sekine M."/>
            <person name="Obayashi M."/>
            <person name="Nishi T."/>
            <person name="Shibahara T."/>
            <person name="Tanaka T."/>
            <person name="Ishii S."/>
            <person name="Yamamoto J."/>
            <person name="Saito K."/>
            <person name="Kawai Y."/>
            <person name="Isono Y."/>
            <person name="Nakamura Y."/>
            <person name="Nagahari K."/>
            <person name="Murakami K."/>
            <person name="Yasuda T."/>
            <person name="Iwayanagi T."/>
            <person name="Wagatsuma M."/>
            <person name="Shiratori A."/>
            <person name="Sudo H."/>
            <person name="Hosoiri T."/>
            <person name="Kaku Y."/>
            <person name="Kodaira H."/>
            <person name="Kondo H."/>
            <person name="Sugawara M."/>
            <person name="Takahashi M."/>
            <person name="Kanda K."/>
            <person name="Yokoi T."/>
            <person name="Furuya T."/>
            <person name="Kikkawa E."/>
            <person name="Omura Y."/>
            <person name="Abe K."/>
            <person name="Kamihara K."/>
            <person name="Katsuta N."/>
            <person name="Sato K."/>
            <person name="Tanikawa M."/>
            <person name="Yamazaki M."/>
            <person name="Ninomiya K."/>
            <person name="Ishibashi T."/>
            <person name="Yamashita H."/>
            <person name="Murakawa K."/>
            <person name="Fujimori K."/>
            <person name="Tanai H."/>
            <person name="Kimata M."/>
            <person name="Watanabe M."/>
            <person name="Hiraoka S."/>
            <person name="Chiba Y."/>
            <person name="Ishida S."/>
            <person name="Ono Y."/>
            <person name="Takiguchi S."/>
            <person name="Watanabe S."/>
            <person name="Yosida M."/>
            <person name="Hotuta T."/>
            <person name="Kusano J."/>
            <person name="Kanehori K."/>
            <person name="Takahashi-Fujii A."/>
            <person name="Hara H."/>
            <person name="Tanase T.-O."/>
            <person name="Nomura Y."/>
            <person name="Togiya S."/>
            <person name="Komai F."/>
            <person name="Hara R."/>
            <person name="Takeuchi K."/>
            <person name="Arita M."/>
            <person name="Imose N."/>
            <person name="Musashino K."/>
            <person name="Yuuki H."/>
            <person name="Oshima A."/>
            <person name="Sasaki N."/>
            <person name="Aotsuka S."/>
            <person name="Yoshikawa Y."/>
            <person name="Matsunawa H."/>
            <person name="Ichihara T."/>
            <person name="Shiohata N."/>
            <person name="Sano S."/>
            <person name="Moriya S."/>
            <person name="Momiyama H."/>
            <person name="Satoh N."/>
            <person name="Takami S."/>
            <person name="Terashima Y."/>
            <person name="Suzuki O."/>
            <person name="Nakagawa S."/>
            <person name="Senoh A."/>
            <person name="Mizoguchi H."/>
            <person name="Goto Y."/>
            <person name="Shimizu F."/>
            <person name="Wakebe H."/>
            <person name="Hishigaki H."/>
            <person name="Watanabe T."/>
            <person name="Sugiyama A."/>
            <person name="Takemoto M."/>
            <person name="Kawakami B."/>
            <person name="Yamazaki M."/>
            <person name="Watanabe K."/>
            <person name="Kumagai A."/>
            <person name="Itakura S."/>
            <person name="Fukuzumi Y."/>
            <person name="Fujimori Y."/>
            <person name="Komiyama M."/>
            <person name="Tashiro H."/>
            <person name="Tanigami A."/>
            <person name="Fujiwara T."/>
            <person name="Ono T."/>
            <person name="Yamada K."/>
            <person name="Fujii Y."/>
            <person name="Ozaki K."/>
            <person name="Hirao M."/>
            <person name="Ohmori Y."/>
            <person name="Kawabata A."/>
            <person name="Hikiji T."/>
            <person name="Kobatake N."/>
            <person name="Inagaki H."/>
            <person name="Ikema Y."/>
            <person name="Okamoto S."/>
            <person name="Okitani R."/>
            <person name="Kawakami T."/>
            <person name="Noguchi S."/>
            <person name="Itoh T."/>
            <person name="Shigeta K."/>
            <person name="Senba T."/>
            <person name="Matsumura K."/>
            <person name="Nakajima Y."/>
            <person name="Mizuno T."/>
            <person name="Morinaga M."/>
            <person name="Sasaki M."/>
            <person name="Togashi T."/>
            <person name="Oyama M."/>
            <person name="Hata H."/>
            <person name="Watanabe M."/>
            <person name="Komatsu T."/>
            <person name="Mizushima-Sugano J."/>
            <person name="Satoh T."/>
            <person name="Shirai Y."/>
            <person name="Takahashi Y."/>
            <person name="Nakagawa K."/>
            <person name="Okumura K."/>
            <person name="Nagase T."/>
            <person name="Nomura N."/>
            <person name="Kikuchi H."/>
            <person name="Masuho Y."/>
            <person name="Yamashita R."/>
            <person name="Nakai K."/>
            <person name="Yada T."/>
            <person name="Nakamura Y."/>
            <person name="Ohara O."/>
            <person name="Isogai T."/>
            <person name="Sugano S."/>
        </authorList>
    </citation>
    <scope>NUCLEOTIDE SEQUENCE [LARGE SCALE MRNA] (ISOFORM DELTA 12)</scope>
</reference>
<reference key="3">
    <citation type="submission" date="2005-03" db="EMBL/GenBank/DDBJ databases">
        <authorList>
            <person name="Totoki Y."/>
            <person name="Toyoda A."/>
            <person name="Takeda T."/>
            <person name="Sakaki Y."/>
            <person name="Tanaka A."/>
            <person name="Yokoyama S."/>
            <person name="Ohara O."/>
            <person name="Nagase T."/>
            <person name="Kikuno R.F."/>
        </authorList>
    </citation>
    <scope>NUCLEOTIDE SEQUENCE [LARGE SCALE MRNA] (ISOFORM DELTA 10)</scope>
    <source>
        <tissue>Brain</tissue>
    </source>
</reference>
<reference key="4">
    <citation type="submission" date="2005-03" db="EMBL/GenBank/DDBJ databases">
        <authorList>
            <person name="Zhou G."/>
            <person name="Nong W."/>
            <person name="Li H."/>
            <person name="Ke R."/>
            <person name="Li M."/>
            <person name="Zheng Z."/>
            <person name="Zhong G."/>
            <person name="Shen C."/>
            <person name="Liang M."/>
            <person name="Lin L."/>
            <person name="Yang S."/>
        </authorList>
    </citation>
    <scope>NUCLEOTIDE SEQUENCE [LARGE SCALE MRNA] (ISOFORM DELTA 7)</scope>
</reference>
<reference key="5">
    <citation type="journal article" date="2005" name="Nature">
        <title>Generation and annotation of the DNA sequences of human chromosomes 2 and 4.</title>
        <authorList>
            <person name="Hillier L.W."/>
            <person name="Graves T.A."/>
            <person name="Fulton R.S."/>
            <person name="Fulton L.A."/>
            <person name="Pepin K.H."/>
            <person name="Minx P."/>
            <person name="Wagner-McPherson C."/>
            <person name="Layman D."/>
            <person name="Wylie K."/>
            <person name="Sekhon M."/>
            <person name="Becker M.C."/>
            <person name="Fewell G.A."/>
            <person name="Delehaunty K.D."/>
            <person name="Miner T.L."/>
            <person name="Nash W.E."/>
            <person name="Kremitzki C."/>
            <person name="Oddy L."/>
            <person name="Du H."/>
            <person name="Sun H."/>
            <person name="Bradshaw-Cordum H."/>
            <person name="Ali J."/>
            <person name="Carter J."/>
            <person name="Cordes M."/>
            <person name="Harris A."/>
            <person name="Isak A."/>
            <person name="van Brunt A."/>
            <person name="Nguyen C."/>
            <person name="Du F."/>
            <person name="Courtney L."/>
            <person name="Kalicki J."/>
            <person name="Ozersky P."/>
            <person name="Abbott S."/>
            <person name="Armstrong J."/>
            <person name="Belter E.A."/>
            <person name="Caruso L."/>
            <person name="Cedroni M."/>
            <person name="Cotton M."/>
            <person name="Davidson T."/>
            <person name="Desai A."/>
            <person name="Elliott G."/>
            <person name="Erb T."/>
            <person name="Fronick C."/>
            <person name="Gaige T."/>
            <person name="Haakenson W."/>
            <person name="Haglund K."/>
            <person name="Holmes A."/>
            <person name="Harkins R."/>
            <person name="Kim K."/>
            <person name="Kruchowski S.S."/>
            <person name="Strong C.M."/>
            <person name="Grewal N."/>
            <person name="Goyea E."/>
            <person name="Hou S."/>
            <person name="Levy A."/>
            <person name="Martinka S."/>
            <person name="Mead K."/>
            <person name="McLellan M.D."/>
            <person name="Meyer R."/>
            <person name="Randall-Maher J."/>
            <person name="Tomlinson C."/>
            <person name="Dauphin-Kohlberg S."/>
            <person name="Kozlowicz-Reilly A."/>
            <person name="Shah N."/>
            <person name="Swearengen-Shahid S."/>
            <person name="Snider J."/>
            <person name="Strong J.T."/>
            <person name="Thompson J."/>
            <person name="Yoakum M."/>
            <person name="Leonard S."/>
            <person name="Pearman C."/>
            <person name="Trani L."/>
            <person name="Radionenko M."/>
            <person name="Waligorski J.E."/>
            <person name="Wang C."/>
            <person name="Rock S.M."/>
            <person name="Tin-Wollam A.-M."/>
            <person name="Maupin R."/>
            <person name="Latreille P."/>
            <person name="Wendl M.C."/>
            <person name="Yang S.-P."/>
            <person name="Pohl C."/>
            <person name="Wallis J.W."/>
            <person name="Spieth J."/>
            <person name="Bieri T.A."/>
            <person name="Berkowicz N."/>
            <person name="Nelson J.O."/>
            <person name="Osborne J."/>
            <person name="Ding L."/>
            <person name="Meyer R."/>
            <person name="Sabo A."/>
            <person name="Shotland Y."/>
            <person name="Sinha P."/>
            <person name="Wohldmann P.E."/>
            <person name="Cook L.L."/>
            <person name="Hickenbotham M.T."/>
            <person name="Eldred J."/>
            <person name="Williams D."/>
            <person name="Jones T.A."/>
            <person name="She X."/>
            <person name="Ciccarelli F.D."/>
            <person name="Izaurralde E."/>
            <person name="Taylor J."/>
            <person name="Schmutz J."/>
            <person name="Myers R.M."/>
            <person name="Cox D.R."/>
            <person name="Huang X."/>
            <person name="McPherson J.D."/>
            <person name="Mardis E.R."/>
            <person name="Clifton S.W."/>
            <person name="Warren W.C."/>
            <person name="Chinwalla A.T."/>
            <person name="Eddy S.R."/>
            <person name="Marra M.A."/>
            <person name="Ovcharenko I."/>
            <person name="Furey T.S."/>
            <person name="Miller W."/>
            <person name="Eichler E.E."/>
            <person name="Bork P."/>
            <person name="Suyama M."/>
            <person name="Torrents D."/>
            <person name="Waterston R.H."/>
            <person name="Wilson R.K."/>
        </authorList>
    </citation>
    <scope>NUCLEOTIDE SEQUENCE [LARGE SCALE GENOMIC DNA]</scope>
</reference>
<reference key="6">
    <citation type="journal article" date="2004" name="Genome Res.">
        <title>The status, quality, and expansion of the NIH full-length cDNA project: the Mammalian Gene Collection (MGC).</title>
        <authorList>
            <consortium name="The MGC Project Team"/>
        </authorList>
    </citation>
    <scope>NUCLEOTIDE SEQUENCE [LARGE SCALE MRNA] (ISOFORM DELTA 6)</scope>
</reference>
<reference key="7">
    <citation type="journal article" date="2000" name="Diabetologia">
        <title>Cloning and quantitative determination of the human Ca2+/calmodulin-dependent protein kinase II (CaMK II) isoforms in human beta cells.</title>
        <authorList>
            <person name="Rochlitz H."/>
            <person name="Voigt A."/>
            <person name="Lankat-Buttgereit B."/>
            <person name="Goeke B."/>
            <person name="Heimberg H."/>
            <person name="Nauck M.A."/>
            <person name="Schiemann U."/>
            <person name="Schatz H."/>
            <person name="Pfeiffer A.F."/>
        </authorList>
    </citation>
    <scope>NUCLEOTIDE SEQUENCE [MRNA] OF 1-243</scope>
    <scope>ALTERNATIVE SPLICING</scope>
    <source>
        <tissue>Insulinoma</tissue>
    </source>
</reference>
<reference key="8">
    <citation type="journal article" date="1997" name="Biochim. Biophys. Acta">
        <title>Identification of novel human tumor cell-specific CaMK-II variants.</title>
        <authorList>
            <person name="Tombes R.M."/>
            <person name="Krystal G.W."/>
        </authorList>
    </citation>
    <scope>NUCLEOTIDE SEQUENCE [MRNA] OF 302-417</scope>
    <scope>ALTERNATIVE SPLICING</scope>
</reference>
<reference key="9">
    <citation type="journal article" date="2004" name="J. Biol. Chem.">
        <title>Comparative analyses of the three-dimensional structures and enzymatic properties of alpha, beta, gamma and delta isoforms of Ca2+-calmodulin-dependent protein kinase II.</title>
        <authorList>
            <person name="Gaertner T.R."/>
            <person name="Kolodziej S.J."/>
            <person name="Wang D."/>
            <person name="Kobayashi R."/>
            <person name="Koomen J.M."/>
            <person name="Stoops J.K."/>
            <person name="Waxham M.N."/>
        </authorList>
    </citation>
    <scope>ACTIVITY REGULATION</scope>
    <scope>SUBUNIT</scope>
    <scope>AUTOPHOSPHORYLATION</scope>
</reference>
<reference key="10">
    <citation type="journal article" date="2006" name="J. Physiol. (Lond.)">
        <title>Ca2+-calmodulin-dependent protein kinase expression and signalling in skeletal muscle during exercise.</title>
        <authorList>
            <person name="Rose A.J."/>
            <person name="Kiens B."/>
            <person name="Richter E.A."/>
        </authorList>
    </citation>
    <scope>FUNCTION IN SKELETAL MUSCLE</scope>
    <scope>PHOSPHORYLATION AT THR-287</scope>
    <scope>FUNCTION IN PHOSPHORYLATION OF PLN</scope>
    <scope>TISSUE SPECIFICITY</scope>
    <scope>INDUCTION</scope>
</reference>
<reference key="11">
    <citation type="journal article" date="2007" name="J. Biol. Chem.">
        <title>Nuclear calcium/calmodulin-dependent protein kinase IIdelta preferentially transmits signals to histone deacetylase 4 in cardiac cells.</title>
        <authorList>
            <person name="Little G.H."/>
            <person name="Bai Y."/>
            <person name="Williams T."/>
            <person name="Poizat C."/>
        </authorList>
    </citation>
    <scope>FUNCTION IN PHOSPHORYLATION OF HDAC4</scope>
</reference>
<reference key="12">
    <citation type="journal article" date="2007" name="Cardiovasc. Res.">
        <title>Role of Ca2+/calmodulin-dependent protein kinase (CaMK) in excitation-contraction coupling in the heart.</title>
        <authorList>
            <person name="Maier L.S."/>
            <person name="Bers D.M."/>
        </authorList>
    </citation>
    <scope>REVIEW ON INVOLVEMENT IN EXCITATION-CONTRACTION COUPLING IN HEART</scope>
</reference>
<reference key="13">
    <citation type="journal article" date="2008" name="Mol. Cell">
        <title>Kinase-selective enrichment enables quantitative phosphoproteomics of the kinome across the cell cycle.</title>
        <authorList>
            <person name="Daub H."/>
            <person name="Olsen J.V."/>
            <person name="Bairlein M."/>
            <person name="Gnad F."/>
            <person name="Oppermann F.S."/>
            <person name="Korner R."/>
            <person name="Greff Z."/>
            <person name="Keri G."/>
            <person name="Stemmann O."/>
            <person name="Mann M."/>
        </authorList>
    </citation>
    <scope>IDENTIFICATION BY MASS SPECTROMETRY [LARGE SCALE ANALYSIS]</scope>
    <source>
        <tissue>Cervix carcinoma</tissue>
    </source>
</reference>
<reference key="14">
    <citation type="journal article" date="2008" name="Proteomics">
        <title>Large-scale phosphoproteome analysis of human liver tissue by enrichment and fractionation of phosphopeptides with strong anion exchange chromatography.</title>
        <authorList>
            <person name="Han G."/>
            <person name="Ye M."/>
            <person name="Zhou H."/>
            <person name="Jiang X."/>
            <person name="Feng S."/>
            <person name="Jiang X."/>
            <person name="Tian R."/>
            <person name="Wan D."/>
            <person name="Zou H."/>
            <person name="Gu J."/>
        </authorList>
    </citation>
    <scope>IDENTIFICATION BY MASS SPECTROMETRY [LARGE SCALE ANALYSIS]</scope>
    <source>
        <tissue>Liver</tissue>
    </source>
</reference>
<reference key="15">
    <citation type="journal article" date="2009" name="Anal. Chem.">
        <title>Lys-N and trypsin cover complementary parts of the phosphoproteome in a refined SCX-based approach.</title>
        <authorList>
            <person name="Gauci S."/>
            <person name="Helbig A.O."/>
            <person name="Slijper M."/>
            <person name="Krijgsveld J."/>
            <person name="Heck A.J."/>
            <person name="Mohammed S."/>
        </authorList>
    </citation>
    <scope>IDENTIFICATION BY MASS SPECTROMETRY [LARGE SCALE ANALYSIS]</scope>
</reference>
<reference key="16">
    <citation type="journal article" date="2009" name="Front. Biosci.">
        <title>Cardiac ryanodine receptor phosphorylation by CaM Kinase II: keeping the balance right.</title>
        <authorList>
            <person name="Currie S."/>
        </authorList>
    </citation>
    <scope>REVIEW ON PHOSPHORYLATION OF RYR2</scope>
</reference>
<reference key="17">
    <citation type="journal article" date="2009" name="Mol. Cell. Proteomics">
        <title>Large-scale proteomics analysis of the human kinome.</title>
        <authorList>
            <person name="Oppermann F.S."/>
            <person name="Gnad F."/>
            <person name="Olsen J.V."/>
            <person name="Hornberger R."/>
            <person name="Greff Z."/>
            <person name="Keri G."/>
            <person name="Mann M."/>
            <person name="Daub H."/>
        </authorList>
    </citation>
    <scope>ACETYLATION [LARGE SCALE ANALYSIS] AT ALA-2</scope>
    <scope>PHOSPHORYLATION [LARGE SCALE ANALYSIS] AT SER-319; SER-404 AND SER-490</scope>
    <scope>CLEAVAGE OF INITIATOR METHIONINE [LARGE SCALE ANALYSIS]</scope>
    <scope>IDENTIFICATION BY MASS SPECTROMETRY [LARGE SCALE ANALYSIS]</scope>
</reference>
<reference key="18">
    <citation type="journal article" date="2009" name="Sci. Signal.">
        <title>Quantitative phosphoproteomic analysis of T cell receptor signaling reveals system-wide modulation of protein-protein interactions.</title>
        <authorList>
            <person name="Mayya V."/>
            <person name="Lundgren D.H."/>
            <person name="Hwang S.-I."/>
            <person name="Rezaul K."/>
            <person name="Wu L."/>
            <person name="Eng J.K."/>
            <person name="Rodionov V."/>
            <person name="Han D.K."/>
        </authorList>
    </citation>
    <scope>IDENTIFICATION BY MASS SPECTROMETRY [LARGE SCALE ANALYSIS]</scope>
    <source>
        <tissue>Leukemic T-cell</tissue>
    </source>
</reference>
<reference key="19">
    <citation type="journal article" date="2011" name="BMC Syst. Biol.">
        <title>Initial characterization of the human central proteome.</title>
        <authorList>
            <person name="Burkard T.R."/>
            <person name="Planyavsky M."/>
            <person name="Kaupe I."/>
            <person name="Breitwieser F.P."/>
            <person name="Buerckstuemmer T."/>
            <person name="Bennett K.L."/>
            <person name="Superti-Furga G."/>
            <person name="Colinge J."/>
        </authorList>
    </citation>
    <scope>IDENTIFICATION BY MASS SPECTROMETRY [LARGE SCALE ANALYSIS]</scope>
</reference>
<reference key="20">
    <citation type="journal article" date="2011" name="Heart Rhythm">
        <title>Role of CaMKII in cardiovascular health, disease, and arrhythmia.</title>
        <authorList>
            <person name="Mohler P.J."/>
            <person name="Hund T.J."/>
        </authorList>
    </citation>
    <scope>REVIEW</scope>
</reference>
<reference key="21">
    <citation type="journal article" date="2011" name="Sci. Signal.">
        <title>System-wide temporal characterization of the proteome and phosphoproteome of human embryonic stem cell differentiation.</title>
        <authorList>
            <person name="Rigbolt K.T."/>
            <person name="Prokhorova T.A."/>
            <person name="Akimov V."/>
            <person name="Henningsen J."/>
            <person name="Johansen P.T."/>
            <person name="Kratchmarova I."/>
            <person name="Kassem M."/>
            <person name="Mann M."/>
            <person name="Olsen J.V."/>
            <person name="Blagoev B."/>
        </authorList>
    </citation>
    <scope>IDENTIFICATION BY MASS SPECTROMETRY [LARGE SCALE ANALYSIS]</scope>
</reference>
<reference key="22">
    <citation type="journal article" date="2014" name="J. Proteomics">
        <title>An enzyme assisted RP-RPLC approach for in-depth analysis of human liver phosphoproteome.</title>
        <authorList>
            <person name="Bian Y."/>
            <person name="Song C."/>
            <person name="Cheng K."/>
            <person name="Dong M."/>
            <person name="Wang F."/>
            <person name="Huang J."/>
            <person name="Sun D."/>
            <person name="Wang L."/>
            <person name="Ye M."/>
            <person name="Zou H."/>
        </authorList>
    </citation>
    <scope>PHOSPHORYLATION [LARGE SCALE ANALYSIS] AT SER-315; SER-319; SER-330; THR-331 AND THR-337</scope>
    <scope>IDENTIFICATION BY MASS SPECTROMETRY [LARGE SCALE ANALYSIS]</scope>
    <source>
        <tissue>Liver</tissue>
    </source>
</reference>
<reference key="23">
    <citation type="journal article" date="2010" name="PLoS Biol.">
        <title>Structure of the CaMKIIdelta/calmodulin complex reveals the molecular mechanism of CaMKII kinase activation.</title>
        <authorList>
            <person name="Rellos P."/>
            <person name="Pike A.C."/>
            <person name="Niesen F.H."/>
            <person name="Salah E."/>
            <person name="Lee W.H."/>
            <person name="von Delft F."/>
            <person name="Knapp S."/>
        </authorList>
    </citation>
    <scope>X-RAY CRYSTALLOGRAPHY (1.90 ANGSTROMS) OF 11-335 IN COMPLEX AND INHIBITORS</scope>
</reference>
<reference key="24">
    <citation type="submission" date="2009-03" db="PDB data bank">
        <title>Calmodulin bound to peptide from calmodulin kinase II (CaMKII).</title>
        <authorList>
            <person name="Ng H.L."/>
            <person name="Alber T.A."/>
            <person name="Wand A.J."/>
        </authorList>
    </citation>
    <scope>X-RAY CRYSTALLOGRAPHY (1.46 ANGSTROMS) OF 294-311 IN COMPLEX WITH CALMODULIN</scope>
</reference>
<reference key="25">
    <citation type="journal article" date="2007" name="Nature">
        <title>Patterns of somatic mutation in human cancer genomes.</title>
        <authorList>
            <person name="Greenman C."/>
            <person name="Stephens P."/>
            <person name="Smith R."/>
            <person name="Dalgliesh G.L."/>
            <person name="Hunter C."/>
            <person name="Bignell G."/>
            <person name="Davies H."/>
            <person name="Teague J."/>
            <person name="Butler A."/>
            <person name="Stevens C."/>
            <person name="Edkins S."/>
            <person name="O'Meara S."/>
            <person name="Vastrik I."/>
            <person name="Schmidt E.E."/>
            <person name="Avis T."/>
            <person name="Barthorpe S."/>
            <person name="Bhamra G."/>
            <person name="Buck G."/>
            <person name="Choudhury B."/>
            <person name="Clements J."/>
            <person name="Cole J."/>
            <person name="Dicks E."/>
            <person name="Forbes S."/>
            <person name="Gray K."/>
            <person name="Halliday K."/>
            <person name="Harrison R."/>
            <person name="Hills K."/>
            <person name="Hinton J."/>
            <person name="Jenkinson A."/>
            <person name="Jones D."/>
            <person name="Menzies A."/>
            <person name="Mironenko T."/>
            <person name="Perry J."/>
            <person name="Raine K."/>
            <person name="Richardson D."/>
            <person name="Shepherd R."/>
            <person name="Small A."/>
            <person name="Tofts C."/>
            <person name="Varian J."/>
            <person name="Webb T."/>
            <person name="West S."/>
            <person name="Widaa S."/>
            <person name="Yates A."/>
            <person name="Cahill D.P."/>
            <person name="Louis D.N."/>
            <person name="Goldstraw P."/>
            <person name="Nicholson A.G."/>
            <person name="Brasseur F."/>
            <person name="Looijenga L."/>
            <person name="Weber B.L."/>
            <person name="Chiew Y.-E."/>
            <person name="DeFazio A."/>
            <person name="Greaves M.F."/>
            <person name="Green A.R."/>
            <person name="Campbell P."/>
            <person name="Birney E."/>
            <person name="Easton D.F."/>
            <person name="Chenevix-Trench G."/>
            <person name="Tan M.-H."/>
            <person name="Khoo S.K."/>
            <person name="Teh B.T."/>
            <person name="Yuen S.T."/>
            <person name="Leung S.Y."/>
            <person name="Wooster R."/>
            <person name="Futreal P.A."/>
            <person name="Stratton M.R."/>
        </authorList>
    </citation>
    <scope>VARIANTS [LARGE SCALE ANALYSIS] GLU-167 AND ILE-493</scope>
</reference>
<evidence type="ECO:0000250" key="1"/>
<evidence type="ECO:0000250" key="2">
    <source>
        <dbReference type="UniProtKB" id="Q6PHZ2"/>
    </source>
</evidence>
<evidence type="ECO:0000255" key="3">
    <source>
        <dbReference type="PROSITE-ProRule" id="PRU00159"/>
    </source>
</evidence>
<evidence type="ECO:0000255" key="4">
    <source>
        <dbReference type="PROSITE-ProRule" id="PRU10027"/>
    </source>
</evidence>
<evidence type="ECO:0000269" key="5">
    <source>
    </source>
</evidence>
<evidence type="ECO:0000269" key="6">
    <source>
    </source>
</evidence>
<evidence type="ECO:0000269" key="7">
    <source>
    </source>
</evidence>
<evidence type="ECO:0000269" key="8">
    <source>
    </source>
</evidence>
<evidence type="ECO:0000269" key="9">
    <source>
    </source>
</evidence>
<evidence type="ECO:0000303" key="10">
    <source>
    </source>
</evidence>
<evidence type="ECO:0000303" key="11">
    <source>
    </source>
</evidence>
<evidence type="ECO:0000303" key="12">
    <source ref="3"/>
</evidence>
<evidence type="ECO:0000303" key="13">
    <source ref="4"/>
</evidence>
<evidence type="ECO:0000305" key="14"/>
<evidence type="ECO:0007744" key="15">
    <source>
    </source>
</evidence>
<evidence type="ECO:0007744" key="16">
    <source>
    </source>
</evidence>
<evidence type="ECO:0007829" key="17">
    <source>
        <dbReference type="PDB" id="2W2C"/>
    </source>
</evidence>
<evidence type="ECO:0007829" key="18">
    <source>
        <dbReference type="PDB" id="2WEL"/>
    </source>
</evidence>
<evidence type="ECO:0007829" key="19">
    <source>
        <dbReference type="PDB" id="3GP2"/>
    </source>
</evidence>
<evidence type="ECO:0007829" key="20">
    <source>
        <dbReference type="PDB" id="5VLO"/>
    </source>
</evidence>
<evidence type="ECO:0007829" key="21">
    <source>
        <dbReference type="PDB" id="7ZRP"/>
    </source>
</evidence>
<sequence length="499" mass="56369">MASTTTCTRFTDEYQLFEELGKGAFSVVRRCMKIPTGQEYAAKIINTKKLSARDHQKLEREARICRLLKHPNIVRLHDSISEEGFHYLVFDLVTGGELFEDIVAREYYSEADASHCIQQILESVNHCHLNGIVHRDLKPENLLLASKSKGAAVKLADFGLAIEVQGDQQAWFGFAGTPGYLSPEVLRKDPYGKPVDMWACGVILYILLVGYPPFWDEDQHRLYQQIKAGAYDFPSPEWDTVTPEAKDLINKMLTINPAKRITASEALKHPWICQRSTVASMMHRQETVDCLKKFNARRKLKGAILTTMLATRNFSAAKSLLKKPDGVKESTESSNTTIEDEDVKARKQEIIKVTEQLIEAINNGDFEAYTKICDPGLTAFEPEALGNLVEGMDFHRFYFENALSKSNKPIHTIILNPHVHLVGDDAACIAYIRLTQYMDGSGMPKTMQSEETRVWHRRDGKWQNVHFHRSGSPTVPIKPPCIPNGKENFSGGTSLWQNI</sequence>
<keyword id="KW-0002">3D-structure</keyword>
<keyword id="KW-0007">Acetylation</keyword>
<keyword id="KW-0025">Alternative splicing</keyword>
<keyword id="KW-0067">ATP-binding</keyword>
<keyword id="KW-0112">Calmodulin-binding</keyword>
<keyword id="KW-1003">Cell membrane</keyword>
<keyword id="KW-0418">Kinase</keyword>
<keyword id="KW-0472">Membrane</keyword>
<keyword id="KW-0547">Nucleotide-binding</keyword>
<keyword id="KW-0597">Phosphoprotein</keyword>
<keyword id="KW-1267">Proteomics identification</keyword>
<keyword id="KW-1185">Reference proteome</keyword>
<keyword id="KW-0703">Sarcoplasmic reticulum</keyword>
<keyword id="KW-0723">Serine/threonine-protein kinase</keyword>
<keyword id="KW-0808">Transferase</keyword>
<proteinExistence type="evidence at protein level"/>
<name>KCC2D_HUMAN</name>
<feature type="initiator methionine" description="Removed" evidence="15">
    <location>
        <position position="1"/>
    </location>
</feature>
<feature type="chain" id="PRO_0000086099" description="Calcium/calmodulin-dependent protein kinase type II subunit delta">
    <location>
        <begin position="2"/>
        <end position="499"/>
    </location>
</feature>
<feature type="domain" description="Protein kinase" evidence="3">
    <location>
        <begin position="14"/>
        <end position="272"/>
    </location>
</feature>
<feature type="region of interest" description="Autoinhibitory domain" evidence="1">
    <location>
        <begin position="283"/>
        <end position="292"/>
    </location>
</feature>
<feature type="region of interest" description="Calmodulin-binding" evidence="1">
    <location>
        <begin position="291"/>
        <end position="301"/>
    </location>
</feature>
<feature type="active site" description="Proton acceptor" evidence="3 4">
    <location>
        <position position="136"/>
    </location>
</feature>
<feature type="binding site" evidence="3">
    <location>
        <begin position="20"/>
        <end position="28"/>
    </location>
    <ligand>
        <name>ATP</name>
        <dbReference type="ChEBI" id="CHEBI:30616"/>
    </ligand>
</feature>
<feature type="binding site" evidence="3">
    <location>
        <position position="43"/>
    </location>
    <ligand>
        <name>ATP</name>
        <dbReference type="ChEBI" id="CHEBI:30616"/>
    </ligand>
</feature>
<feature type="modified residue" description="N-acetylalanine" evidence="15">
    <location>
        <position position="2"/>
    </location>
</feature>
<feature type="modified residue" description="Phosphothreonine; by autocatalysis" evidence="7">
    <location>
        <position position="287"/>
    </location>
</feature>
<feature type="modified residue" description="Phosphothreonine; by autocatalysis" evidence="14">
    <location>
        <position position="306"/>
    </location>
</feature>
<feature type="modified residue" description="Phosphothreonine; by autocatalysis" evidence="14">
    <location>
        <position position="307"/>
    </location>
</feature>
<feature type="modified residue" description="Phosphoserine" evidence="16">
    <location>
        <position position="315"/>
    </location>
</feature>
<feature type="modified residue" description="N6-acetyllysine" evidence="2">
    <location>
        <position position="318"/>
    </location>
</feature>
<feature type="modified residue" description="Phosphoserine" evidence="15 16">
    <location>
        <position position="319"/>
    </location>
</feature>
<feature type="modified residue" description="Phosphoserine" evidence="16">
    <location>
        <position position="330"/>
    </location>
</feature>
<feature type="modified residue" description="Phosphothreonine" evidence="16">
    <location>
        <position position="331"/>
    </location>
</feature>
<feature type="modified residue" description="Phosphoserine" evidence="2">
    <location>
        <position position="333"/>
    </location>
</feature>
<feature type="modified residue" description="Phosphothreonine" evidence="2">
    <location>
        <position position="336"/>
    </location>
</feature>
<feature type="modified residue" description="Phosphothreonine" evidence="16">
    <location>
        <position position="337"/>
    </location>
</feature>
<feature type="modified residue" description="Phosphoserine" evidence="15">
    <location>
        <position position="404"/>
    </location>
</feature>
<feature type="modified residue" description="Phosphoserine" evidence="15">
    <location>
        <position position="490"/>
    </location>
</feature>
<feature type="modified residue" description="Phosphoserine" evidence="2">
    <location>
        <position position="494"/>
    </location>
</feature>
<feature type="splice variant" id="VSP_023095" description="In isoform Delta 11." evidence="14">
    <original>K</original>
    <variation>KKRKSSSSVQMMEPQTTVIHNPDGNK</variation>
    <location>
        <position position="328"/>
    </location>
</feature>
<feature type="splice variant" id="VSP_023096" description="In isoform Delta 3 and isoform Delta 7." evidence="13">
    <original>K</original>
    <variation>KKRKSSSSVQMM</variation>
    <location>
        <position position="328"/>
    </location>
</feature>
<feature type="splice variant" id="VSP_023097" description="In isoform Delta 4 and isoform Delta 8." evidence="14">
    <original>K</original>
    <variation>KINNKANVVTSPKENIPTPAL</variation>
    <location>
        <position position="328"/>
    </location>
</feature>
<feature type="splice variant" id="VSP_023098" description="In isoform Delta 9 and isoform Delta 10." evidence="12">
    <original>E</original>
    <variation>EPQTTVIHNPDGNKE</variation>
    <location>
        <position position="329"/>
    </location>
</feature>
<feature type="splice variant" id="VSP_041820" description="In isoform Delta 12." evidence="10">
    <original>K</original>
    <variation>N</variation>
    <location>
        <position position="478"/>
    </location>
</feature>
<feature type="splice variant" id="VSP_023099" description="In isoform Delta 6, isoform Delta 7, isoform Delta 8, isoform Delta 10 and isoform Delta 12." evidence="10 11 12 13">
    <location>
        <begin position="479"/>
        <end position="499"/>
    </location>
</feature>
<feature type="sequence variant" id="VAR_040602" description="In dbSNP:rs35367671." evidence="9">
    <original>D</original>
    <variation>E</variation>
    <location>
        <position position="167"/>
    </location>
</feature>
<feature type="sequence variant" id="VAR_028196" description="In dbSNP:rs1053668.">
    <original>Q</original>
    <variation>E</variation>
    <location>
        <position position="463"/>
    </location>
</feature>
<feature type="sequence variant" id="VAR_040603" description="In dbSNP:rs35765784." evidence="9">
    <original>T</original>
    <variation>I</variation>
    <location>
        <position position="493"/>
    </location>
</feature>
<feature type="sequence conflict" description="In Ref. 1; AAD20442." evidence="14" ref="1">
    <original>E</original>
    <variation>G</variation>
    <location>
        <position position="39"/>
    </location>
</feature>
<feature type="sequence conflict" description="In Ref. 4; AAX88806." evidence="14" ref="4">
    <original>I</original>
    <variation>T</variation>
    <location>
        <position position="272"/>
    </location>
</feature>
<feature type="helix" evidence="18">
    <location>
        <begin position="10"/>
        <end position="13"/>
    </location>
</feature>
<feature type="strand" evidence="18">
    <location>
        <begin position="14"/>
        <end position="23"/>
    </location>
</feature>
<feature type="strand" evidence="18">
    <location>
        <begin position="26"/>
        <end position="33"/>
    </location>
</feature>
<feature type="turn" evidence="18">
    <location>
        <begin position="34"/>
        <end position="36"/>
    </location>
</feature>
<feature type="strand" evidence="18">
    <location>
        <begin position="39"/>
        <end position="46"/>
    </location>
</feature>
<feature type="helix" evidence="18">
    <location>
        <begin position="47"/>
        <end position="49"/>
    </location>
</feature>
<feature type="helix" evidence="18">
    <location>
        <begin position="52"/>
        <end position="67"/>
    </location>
</feature>
<feature type="strand" evidence="18">
    <location>
        <begin position="76"/>
        <end position="82"/>
    </location>
</feature>
<feature type="strand" evidence="18">
    <location>
        <begin position="85"/>
        <end position="90"/>
    </location>
</feature>
<feature type="helix" evidence="18">
    <location>
        <begin position="98"/>
        <end position="105"/>
    </location>
</feature>
<feature type="helix" evidence="18">
    <location>
        <begin position="110"/>
        <end position="129"/>
    </location>
</feature>
<feature type="helix" evidence="18">
    <location>
        <begin position="139"/>
        <end position="141"/>
    </location>
</feature>
<feature type="strand" evidence="18">
    <location>
        <begin position="142"/>
        <end position="148"/>
    </location>
</feature>
<feature type="strand" evidence="18">
    <location>
        <begin position="153"/>
        <end position="155"/>
    </location>
</feature>
<feature type="helix" evidence="18">
    <location>
        <begin position="158"/>
        <end position="160"/>
    </location>
</feature>
<feature type="helix" evidence="18">
    <location>
        <begin position="178"/>
        <end position="180"/>
    </location>
</feature>
<feature type="helix" evidence="18">
    <location>
        <begin position="183"/>
        <end position="186"/>
    </location>
</feature>
<feature type="helix" evidence="18">
    <location>
        <begin position="194"/>
        <end position="209"/>
    </location>
</feature>
<feature type="helix" evidence="18">
    <location>
        <begin position="219"/>
        <end position="228"/>
    </location>
</feature>
<feature type="turn" evidence="18">
    <location>
        <begin position="235"/>
        <end position="240"/>
    </location>
</feature>
<feature type="helix" evidence="18">
    <location>
        <begin position="243"/>
        <end position="252"/>
    </location>
</feature>
<feature type="turn" evidence="18">
    <location>
        <begin position="257"/>
        <end position="259"/>
    </location>
</feature>
<feature type="helix" evidence="18">
    <location>
        <begin position="263"/>
        <end position="266"/>
    </location>
</feature>
<feature type="helix" evidence="18">
    <location>
        <begin position="270"/>
        <end position="273"/>
    </location>
</feature>
<feature type="helix" evidence="20">
    <location>
        <begin position="275"/>
        <end position="278"/>
    </location>
</feature>
<feature type="helix" evidence="19">
    <location>
        <begin position="296"/>
        <end position="310"/>
    </location>
</feature>
<feature type="turn" evidence="21">
    <location>
        <begin position="311"/>
        <end position="313"/>
    </location>
</feature>
<feature type="helix" evidence="17">
    <location>
        <begin position="340"/>
        <end position="363"/>
    </location>
</feature>
<feature type="helix" evidence="17">
    <location>
        <begin position="366"/>
        <end position="372"/>
    </location>
</feature>
<feature type="strand" evidence="17">
    <location>
        <begin position="373"/>
        <end position="380"/>
    </location>
</feature>
<feature type="helix" evidence="17">
    <location>
        <begin position="382"/>
        <end position="384"/>
    </location>
</feature>
<feature type="strand" evidence="17">
    <location>
        <begin position="389"/>
        <end position="392"/>
    </location>
</feature>
<feature type="helix" evidence="17">
    <location>
        <begin position="393"/>
        <end position="401"/>
    </location>
</feature>
<feature type="strand" evidence="17">
    <location>
        <begin position="410"/>
        <end position="421"/>
    </location>
</feature>
<feature type="strand" evidence="17">
    <location>
        <begin position="426"/>
        <end position="438"/>
    </location>
</feature>
<feature type="strand" evidence="17">
    <location>
        <begin position="444"/>
        <end position="458"/>
    </location>
</feature>
<feature type="strand" evidence="17">
    <location>
        <begin position="461"/>
        <end position="470"/>
    </location>
</feature>
<dbReference type="EC" id="2.7.11.17"/>
<dbReference type="EMBL" id="AF071569">
    <property type="protein sequence ID" value="AAD20442.1"/>
    <property type="molecule type" value="mRNA"/>
</dbReference>
<dbReference type="EMBL" id="AK055642">
    <property type="protein sequence ID" value="BAG51545.1"/>
    <property type="molecule type" value="mRNA"/>
</dbReference>
<dbReference type="EMBL" id="AB209288">
    <property type="protein sequence ID" value="BAD92525.1"/>
    <property type="status" value="ALT_INIT"/>
    <property type="molecule type" value="mRNA"/>
</dbReference>
<dbReference type="EMBL" id="AY987011">
    <property type="protein sequence ID" value="AAX88806.1"/>
    <property type="molecule type" value="mRNA"/>
</dbReference>
<dbReference type="EMBL" id="AC004056">
    <property type="status" value="NOT_ANNOTATED_CDS"/>
    <property type="molecule type" value="Genomic_DNA"/>
</dbReference>
<dbReference type="EMBL" id="AC004168">
    <property type="status" value="NOT_ANNOTATED_CDS"/>
    <property type="molecule type" value="Genomic_DNA"/>
</dbReference>
<dbReference type="EMBL" id="AC093900">
    <property type="status" value="NOT_ANNOTATED_CDS"/>
    <property type="molecule type" value="Genomic_DNA"/>
</dbReference>
<dbReference type="EMBL" id="AC107386">
    <property type="status" value="NOT_ANNOTATED_CDS"/>
    <property type="molecule type" value="Genomic_DNA"/>
</dbReference>
<dbReference type="EMBL" id="BC032784">
    <property type="protein sequence ID" value="AAH32784.1"/>
    <property type="molecule type" value="mRNA"/>
</dbReference>
<dbReference type="EMBL" id="AJ252239">
    <property type="protein sequence ID" value="CAB65123.1"/>
    <property type="molecule type" value="mRNA"/>
</dbReference>
<dbReference type="EMBL" id="U50361">
    <property type="protein sequence ID" value="AAB16866.1"/>
    <property type="molecule type" value="mRNA"/>
</dbReference>
<dbReference type="CCDS" id="CCDS3703.1">
    <molecule id="Q13557-1"/>
</dbReference>
<dbReference type="CCDS" id="CCDS3704.1">
    <molecule id="Q13557-8"/>
</dbReference>
<dbReference type="CCDS" id="CCDS43263.1">
    <molecule id="Q13557-12"/>
</dbReference>
<dbReference type="CCDS" id="CCDS47127.1">
    <molecule id="Q13557-10"/>
</dbReference>
<dbReference type="CCDS" id="CCDS54797.1">
    <molecule id="Q13557-9"/>
</dbReference>
<dbReference type="CCDS" id="CCDS93607.1">
    <molecule id="Q13557-6"/>
</dbReference>
<dbReference type="CCDS" id="CCDS93609.1">
    <molecule id="Q13557-3"/>
</dbReference>
<dbReference type="CCDS" id="CCDS93612.1">
    <molecule id="Q13557-11"/>
</dbReference>
<dbReference type="RefSeq" id="NP_001212.2">
    <molecule id="Q13557-1"/>
    <property type="nucleotide sequence ID" value="NM_001221.3"/>
</dbReference>
<dbReference type="RefSeq" id="NP_001308495.1">
    <molecule id="Q13557-6"/>
    <property type="nucleotide sequence ID" value="NM_001321566.2"/>
</dbReference>
<dbReference type="RefSeq" id="NP_001308502.1">
    <molecule id="Q13557-11"/>
    <property type="nucleotide sequence ID" value="NM_001321573.2"/>
</dbReference>
<dbReference type="RefSeq" id="NP_001308509.1">
    <molecule id="Q13557-4"/>
    <property type="nucleotide sequence ID" value="NM_001321580.2"/>
</dbReference>
<dbReference type="RefSeq" id="NP_001308518.1">
    <molecule id="Q13557-10"/>
    <property type="nucleotide sequence ID" value="NM_001321589.2"/>
</dbReference>
<dbReference type="RefSeq" id="NP_001383894.1">
    <molecule id="Q13557-3"/>
    <property type="nucleotide sequence ID" value="NM_001396965.1"/>
</dbReference>
<dbReference type="RefSeq" id="NP_742112.1">
    <molecule id="Q13557-10"/>
    <property type="nucleotide sequence ID" value="NM_172114.2"/>
</dbReference>
<dbReference type="RefSeq" id="NP_742113.1">
    <molecule id="Q13557-8"/>
    <property type="nucleotide sequence ID" value="NM_172115.3"/>
</dbReference>
<dbReference type="RefSeq" id="NP_742125.1">
    <molecule id="Q13557-8"/>
    <property type="nucleotide sequence ID" value="NM_172127.3"/>
</dbReference>
<dbReference type="RefSeq" id="NP_742126.1">
    <molecule id="Q13557-12"/>
    <property type="nucleotide sequence ID" value="NM_172128.3"/>
</dbReference>
<dbReference type="RefSeq" id="NP_742127.1">
    <molecule id="Q13557-9"/>
    <property type="nucleotide sequence ID" value="NM_172129.2"/>
</dbReference>
<dbReference type="RefSeq" id="XP_011530591.1">
    <property type="nucleotide sequence ID" value="XM_011532289.1"/>
</dbReference>
<dbReference type="RefSeq" id="XP_011530593.1">
    <property type="nucleotide sequence ID" value="XM_011532291.1"/>
</dbReference>
<dbReference type="PDB" id="2VN9">
    <property type="method" value="X-ray"/>
    <property type="resolution" value="2.30 A"/>
    <property type="chains" value="A/B=11-309"/>
</dbReference>
<dbReference type="PDB" id="2W2C">
    <property type="method" value="X-ray"/>
    <property type="resolution" value="2.70 A"/>
    <property type="chains" value="A/B/C/D/E/F/G/H/I/J/K/L/M/N=334-475"/>
</dbReference>
<dbReference type="PDB" id="2WEL">
    <property type="method" value="X-ray"/>
    <property type="resolution" value="1.90 A"/>
    <property type="chains" value="A=11-335"/>
</dbReference>
<dbReference type="PDB" id="3GP2">
    <property type="method" value="X-ray"/>
    <property type="resolution" value="1.46 A"/>
    <property type="chains" value="B=294-311"/>
</dbReference>
<dbReference type="PDB" id="5VLO">
    <property type="method" value="X-ray"/>
    <property type="resolution" value="2.05 A"/>
    <property type="chains" value="A/B=3-301"/>
</dbReference>
<dbReference type="PDB" id="6AYW">
    <property type="method" value="X-ray"/>
    <property type="resolution" value="2.05 A"/>
    <property type="chains" value="A/B=3-301"/>
</dbReference>
<dbReference type="PDB" id="7ZRP">
    <property type="method" value="X-ray"/>
    <property type="resolution" value="2.65 A"/>
    <property type="chains" value="B/D=294-315"/>
</dbReference>
<dbReference type="PDB" id="7ZRQ">
    <property type="method" value="X-ray"/>
    <property type="resolution" value="1.68 A"/>
    <property type="chains" value="B=294-315"/>
</dbReference>
<dbReference type="PDBsum" id="2VN9"/>
<dbReference type="PDBsum" id="2W2C"/>
<dbReference type="PDBsum" id="2WEL"/>
<dbReference type="PDBsum" id="3GP2"/>
<dbReference type="PDBsum" id="5VLO"/>
<dbReference type="PDBsum" id="6AYW"/>
<dbReference type="PDBsum" id="7ZRP"/>
<dbReference type="PDBsum" id="7ZRQ"/>
<dbReference type="SMR" id="Q13557"/>
<dbReference type="BioGRID" id="107267">
    <property type="interactions" value="209"/>
</dbReference>
<dbReference type="CORUM" id="Q13557"/>
<dbReference type="DIP" id="DIP-33129N"/>
<dbReference type="FunCoup" id="Q13557">
    <property type="interactions" value="3069"/>
</dbReference>
<dbReference type="IntAct" id="Q13557">
    <property type="interactions" value="206"/>
</dbReference>
<dbReference type="MINT" id="Q13557"/>
<dbReference type="STRING" id="9606.ENSP00000425824"/>
<dbReference type="BindingDB" id="Q13557"/>
<dbReference type="ChEMBL" id="CHEMBL2801"/>
<dbReference type="DrugBank" id="DB08039">
    <property type="generic name" value="(3Z)-N,N-DIMETHYL-2-OXO-3-(4,5,6,7-TETRAHYDRO-1H-INDOL-2-YLMETHYLIDENE)-2,3-DIHYDRO-1H-INDOLE-5-SULFONAMIDE"/>
</dbReference>
<dbReference type="DrugBank" id="DB07853">
    <property type="generic name" value="2-[4-[4-[(5-cyclopropyl-1H-pyrazol-3-yl)amino]quinazolin-2-yl]iminocyclohexa-2,5-dien-1-yl]acetonitrile"/>
</dbReference>
<dbReference type="DrugBank" id="DB12010">
    <property type="generic name" value="Fostamatinib"/>
</dbReference>
<dbReference type="DrugBank" id="DB12571">
    <property type="generic name" value="Rimacalib"/>
</dbReference>
<dbReference type="DrugCentral" id="Q13557"/>
<dbReference type="GuidetoPHARMACOLOGY" id="1558"/>
<dbReference type="GlyGen" id="Q13557">
    <property type="glycosylation" value="5 sites, 1 O-linked glycan (4 sites)"/>
</dbReference>
<dbReference type="iPTMnet" id="Q13557"/>
<dbReference type="MetOSite" id="Q13557"/>
<dbReference type="PhosphoSitePlus" id="Q13557"/>
<dbReference type="SwissPalm" id="Q13557"/>
<dbReference type="BioMuta" id="CAMK2D"/>
<dbReference type="DMDM" id="116242602"/>
<dbReference type="jPOST" id="Q13557"/>
<dbReference type="MassIVE" id="Q13557"/>
<dbReference type="PaxDb" id="9606-ENSP00000339740"/>
<dbReference type="PeptideAtlas" id="Q13557"/>
<dbReference type="ProteomicsDB" id="59548">
    <molecule id="Q13557-1"/>
</dbReference>
<dbReference type="ProteomicsDB" id="59549">
    <molecule id="Q13557-10"/>
</dbReference>
<dbReference type="ProteomicsDB" id="59550">
    <molecule id="Q13557-11"/>
</dbReference>
<dbReference type="ProteomicsDB" id="59551">
    <molecule id="Q13557-12"/>
</dbReference>
<dbReference type="ProteomicsDB" id="59552">
    <molecule id="Q13557-3"/>
</dbReference>
<dbReference type="ProteomicsDB" id="59553">
    <molecule id="Q13557-4"/>
</dbReference>
<dbReference type="ProteomicsDB" id="59554">
    <molecule id="Q13557-5"/>
</dbReference>
<dbReference type="ProteomicsDB" id="59555">
    <molecule id="Q13557-6"/>
</dbReference>
<dbReference type="ProteomicsDB" id="59556">
    <molecule id="Q13557-8"/>
</dbReference>
<dbReference type="ProteomicsDB" id="59557">
    <molecule id="Q13557-9"/>
</dbReference>
<dbReference type="Pumba" id="Q13557"/>
<dbReference type="Antibodypedia" id="15593">
    <property type="antibodies" value="348 antibodies from 36 providers"/>
</dbReference>
<dbReference type="DNASU" id="817"/>
<dbReference type="Ensembl" id="ENST00000296402.9">
    <molecule id="Q13557-8"/>
    <property type="protein sequence ID" value="ENSP00000296402.5"/>
    <property type="gene ID" value="ENSG00000145349.20"/>
</dbReference>
<dbReference type="Ensembl" id="ENST00000342666.9">
    <molecule id="Q13557-1"/>
    <property type="protein sequence ID" value="ENSP00000339740.5"/>
    <property type="gene ID" value="ENSG00000145349.20"/>
</dbReference>
<dbReference type="Ensembl" id="ENST00000379773.6">
    <molecule id="Q13557-8"/>
    <property type="protein sequence ID" value="ENSP00000369098.2"/>
    <property type="gene ID" value="ENSG00000145349.20"/>
</dbReference>
<dbReference type="Ensembl" id="ENST00000394522.7">
    <molecule id="Q13557-10"/>
    <property type="protein sequence ID" value="ENSP00000378030.3"/>
    <property type="gene ID" value="ENSG00000145349.20"/>
</dbReference>
<dbReference type="Ensembl" id="ENST00000394524.7">
    <molecule id="Q13557-12"/>
    <property type="protein sequence ID" value="ENSP00000378032.3"/>
    <property type="gene ID" value="ENSG00000145349.20"/>
</dbReference>
<dbReference type="Ensembl" id="ENST00000508738.5">
    <molecule id="Q13557-9"/>
    <property type="protein sequence ID" value="ENSP00000422566.1"/>
    <property type="gene ID" value="ENSG00000145349.20"/>
</dbReference>
<dbReference type="Ensembl" id="ENST00000515496.5">
    <molecule id="Q13557-3"/>
    <property type="protein sequence ID" value="ENSP00000423482.1"/>
    <property type="gene ID" value="ENSG00000145349.20"/>
</dbReference>
<dbReference type="Ensembl" id="ENST00000683023.1">
    <molecule id="Q13557-1"/>
    <property type="protein sequence ID" value="ENSP00000507073.1"/>
    <property type="gene ID" value="ENSG00000145349.20"/>
</dbReference>
<dbReference type="Ensembl" id="ENST00000699047.1">
    <molecule id="Q13557-6"/>
    <property type="protein sequence ID" value="ENSP00000514099.1"/>
    <property type="gene ID" value="ENSG00000145349.20"/>
</dbReference>
<dbReference type="Ensembl" id="ENST00000699048.1">
    <molecule id="Q13557-11"/>
    <property type="protein sequence ID" value="ENSP00000514100.1"/>
    <property type="gene ID" value="ENSG00000145349.20"/>
</dbReference>
<dbReference type="Ensembl" id="ENST00000699381.1">
    <molecule id="Q13557-6"/>
    <property type="protein sequence ID" value="ENSP00000514346.1"/>
    <property type="gene ID" value="ENSG00000145349.20"/>
</dbReference>
<dbReference type="GeneID" id="817"/>
<dbReference type="KEGG" id="hsa:817"/>
<dbReference type="UCSC" id="uc003ibi.4">
    <molecule id="Q13557-1"/>
    <property type="organism name" value="human"/>
</dbReference>
<dbReference type="AGR" id="HGNC:1462"/>
<dbReference type="CTD" id="817"/>
<dbReference type="DisGeNET" id="817"/>
<dbReference type="GeneCards" id="CAMK2D"/>
<dbReference type="HGNC" id="HGNC:1462">
    <property type="gene designation" value="CAMK2D"/>
</dbReference>
<dbReference type="HPA" id="ENSG00000145349">
    <property type="expression patterns" value="Tissue enhanced (heart)"/>
</dbReference>
<dbReference type="MalaCards" id="CAMK2D"/>
<dbReference type="MIM" id="607708">
    <property type="type" value="gene"/>
</dbReference>
<dbReference type="neXtProt" id="NX_Q13557"/>
<dbReference type="OpenTargets" id="ENSG00000145349"/>
<dbReference type="PharmGKB" id="PA92"/>
<dbReference type="VEuPathDB" id="HostDB:ENSG00000145349"/>
<dbReference type="eggNOG" id="KOG0033">
    <property type="taxonomic scope" value="Eukaryota"/>
</dbReference>
<dbReference type="GeneTree" id="ENSGT00940000155150"/>
<dbReference type="HOGENOM" id="CLU_000288_71_0_1"/>
<dbReference type="InParanoid" id="Q13557"/>
<dbReference type="OrthoDB" id="336747at2759"/>
<dbReference type="PAN-GO" id="Q13557">
    <property type="GO annotations" value="4 GO annotations based on evolutionary models"/>
</dbReference>
<dbReference type="PhylomeDB" id="Q13557"/>
<dbReference type="TreeFam" id="TF315229"/>
<dbReference type="BRENDA" id="2.7.11.17">
    <property type="organism ID" value="2681"/>
</dbReference>
<dbReference type="PathwayCommons" id="Q13557"/>
<dbReference type="Reactome" id="R-HSA-111932">
    <property type="pathway name" value="CaMK IV-mediated phosphorylation of CREB"/>
</dbReference>
<dbReference type="Reactome" id="R-HSA-3371571">
    <property type="pathway name" value="HSF1-dependent transactivation"/>
</dbReference>
<dbReference type="Reactome" id="R-HSA-399719">
    <property type="pathway name" value="Trafficking of AMPA receptors"/>
</dbReference>
<dbReference type="Reactome" id="R-HSA-438066">
    <property type="pathway name" value="Unblocking of NMDA receptors, glutamate binding and activation"/>
</dbReference>
<dbReference type="Reactome" id="R-HSA-442982">
    <property type="pathway name" value="Ras activation upon Ca2+ influx through NMDA receptor"/>
</dbReference>
<dbReference type="Reactome" id="R-HSA-5576892">
    <property type="pathway name" value="Phase 0 - rapid depolarisation"/>
</dbReference>
<dbReference type="Reactome" id="R-HSA-5578775">
    <property type="pathway name" value="Ion homeostasis"/>
</dbReference>
<dbReference type="Reactome" id="R-HSA-5673000">
    <property type="pathway name" value="RAF activation"/>
</dbReference>
<dbReference type="Reactome" id="R-HSA-5673001">
    <property type="pathway name" value="RAF/MAP kinase cascade"/>
</dbReference>
<dbReference type="Reactome" id="R-HSA-6802946">
    <property type="pathway name" value="Signaling by moderate kinase activity BRAF mutants"/>
</dbReference>
<dbReference type="Reactome" id="R-HSA-6802952">
    <property type="pathway name" value="Signaling by BRAF and RAF1 fusions"/>
</dbReference>
<dbReference type="Reactome" id="R-HSA-6802955">
    <property type="pathway name" value="Paradoxical activation of RAF signaling by kinase inactive BRAF"/>
</dbReference>
<dbReference type="Reactome" id="R-HSA-877300">
    <property type="pathway name" value="Interferon gamma signaling"/>
</dbReference>
<dbReference type="Reactome" id="R-HSA-9022692">
    <property type="pathway name" value="Regulation of MECP2 expression and activity"/>
</dbReference>
<dbReference type="Reactome" id="R-HSA-936837">
    <property type="pathway name" value="Ion transport by P-type ATPases"/>
</dbReference>
<dbReference type="Reactome" id="R-HSA-9609736">
    <property type="pathway name" value="Assembly and cell surface presentation of NMDA receptors"/>
</dbReference>
<dbReference type="Reactome" id="R-HSA-9617324">
    <property type="pathway name" value="Negative regulation of NMDA receptor-mediated neuronal transmission"/>
</dbReference>
<dbReference type="Reactome" id="R-HSA-9620244">
    <property type="pathway name" value="Long-term potentiation"/>
</dbReference>
<dbReference type="Reactome" id="R-HSA-9649948">
    <property type="pathway name" value="Signaling downstream of RAS mutants"/>
</dbReference>
<dbReference type="Reactome" id="R-HSA-9656223">
    <property type="pathway name" value="Signaling by RAF1 mutants"/>
</dbReference>
<dbReference type="SignaLink" id="Q13557"/>
<dbReference type="SIGNOR" id="Q13557"/>
<dbReference type="BioGRID-ORCS" id="817">
    <property type="hits" value="14 hits in 1185 CRISPR screens"/>
</dbReference>
<dbReference type="CD-CODE" id="FB4E32DD">
    <property type="entry name" value="Presynaptic clusters and postsynaptic densities"/>
</dbReference>
<dbReference type="ChiTaRS" id="CAMK2D">
    <property type="organism name" value="human"/>
</dbReference>
<dbReference type="EvolutionaryTrace" id="Q13557"/>
<dbReference type="GeneWiki" id="CAMK2D"/>
<dbReference type="GenomeRNAi" id="817"/>
<dbReference type="Pharos" id="Q13557">
    <property type="development level" value="Tchem"/>
</dbReference>
<dbReference type="PRO" id="PR:Q13557"/>
<dbReference type="Proteomes" id="UP000005640">
    <property type="component" value="Chromosome 4"/>
</dbReference>
<dbReference type="RNAct" id="Q13557">
    <property type="molecule type" value="protein"/>
</dbReference>
<dbReference type="Bgee" id="ENSG00000145349">
    <property type="expression patterns" value="Expressed in left ventricle myocardium and 187 other cell types or tissues"/>
</dbReference>
<dbReference type="ExpressionAtlas" id="Q13557">
    <property type="expression patterns" value="baseline and differential"/>
</dbReference>
<dbReference type="GO" id="GO:0005954">
    <property type="term" value="C:calcium- and calmodulin-dependent protein kinase complex"/>
    <property type="evidence" value="ECO:0000314"/>
    <property type="project" value="BHF-UCL"/>
</dbReference>
<dbReference type="GO" id="GO:0005737">
    <property type="term" value="C:cytoplasm"/>
    <property type="evidence" value="ECO:0000250"/>
    <property type="project" value="BHF-UCL"/>
</dbReference>
<dbReference type="GO" id="GO:0005829">
    <property type="term" value="C:cytosol"/>
    <property type="evidence" value="ECO:0000304"/>
    <property type="project" value="Reactome"/>
</dbReference>
<dbReference type="GO" id="GO:0030666">
    <property type="term" value="C:endocytic vesicle membrane"/>
    <property type="evidence" value="ECO:0000304"/>
    <property type="project" value="Reactome"/>
</dbReference>
<dbReference type="GO" id="GO:0016020">
    <property type="term" value="C:membrane"/>
    <property type="evidence" value="ECO:0007005"/>
    <property type="project" value="UniProtKB"/>
</dbReference>
<dbReference type="GO" id="GO:0043005">
    <property type="term" value="C:neuron projection"/>
    <property type="evidence" value="ECO:0000318"/>
    <property type="project" value="GO_Central"/>
</dbReference>
<dbReference type="GO" id="GO:0005654">
    <property type="term" value="C:nucleoplasm"/>
    <property type="evidence" value="ECO:0000304"/>
    <property type="project" value="Reactome"/>
</dbReference>
<dbReference type="GO" id="GO:0005634">
    <property type="term" value="C:nucleus"/>
    <property type="evidence" value="ECO:0000250"/>
    <property type="project" value="BHF-UCL"/>
</dbReference>
<dbReference type="GO" id="GO:0014069">
    <property type="term" value="C:postsynaptic density"/>
    <property type="evidence" value="ECO:0000318"/>
    <property type="project" value="GO_Central"/>
</dbReference>
<dbReference type="GO" id="GO:0042383">
    <property type="term" value="C:sarcolemma"/>
    <property type="evidence" value="ECO:0007669"/>
    <property type="project" value="UniProtKB-SubCell"/>
</dbReference>
<dbReference type="GO" id="GO:0033017">
    <property type="term" value="C:sarcoplasmic reticulum membrane"/>
    <property type="evidence" value="ECO:0007669"/>
    <property type="project" value="UniProtKB-SubCell"/>
</dbReference>
<dbReference type="GO" id="GO:0005524">
    <property type="term" value="F:ATP binding"/>
    <property type="evidence" value="ECO:0007669"/>
    <property type="project" value="UniProtKB-KW"/>
</dbReference>
<dbReference type="GO" id="GO:0004683">
    <property type="term" value="F:calcium/calmodulin-dependent protein kinase activity"/>
    <property type="evidence" value="ECO:0000314"/>
    <property type="project" value="BHF-UCL"/>
</dbReference>
<dbReference type="GO" id="GO:0005516">
    <property type="term" value="F:calmodulin binding"/>
    <property type="evidence" value="ECO:0000353"/>
    <property type="project" value="BHF-UCL"/>
</dbReference>
<dbReference type="GO" id="GO:0042802">
    <property type="term" value="F:identical protein binding"/>
    <property type="evidence" value="ECO:0000353"/>
    <property type="project" value="IntAct"/>
</dbReference>
<dbReference type="GO" id="GO:0042803">
    <property type="term" value="F:protein homodimerization activity"/>
    <property type="evidence" value="ECO:0000353"/>
    <property type="project" value="BHF-UCL"/>
</dbReference>
<dbReference type="GO" id="GO:0106310">
    <property type="term" value="F:protein serine kinase activity"/>
    <property type="evidence" value="ECO:0007669"/>
    <property type="project" value="RHEA"/>
</dbReference>
<dbReference type="GO" id="GO:0004674">
    <property type="term" value="F:protein serine/threonine kinase activity"/>
    <property type="evidence" value="ECO:0000314"/>
    <property type="project" value="BHF-UCL"/>
</dbReference>
<dbReference type="GO" id="GO:0019871">
    <property type="term" value="F:sodium channel inhibitor activity"/>
    <property type="evidence" value="ECO:0000314"/>
    <property type="project" value="BHF-UCL"/>
</dbReference>
<dbReference type="GO" id="GO:0031432">
    <property type="term" value="F:titin binding"/>
    <property type="evidence" value="ECO:0000353"/>
    <property type="project" value="BHF-UCL"/>
</dbReference>
<dbReference type="GO" id="GO:0044325">
    <property type="term" value="F:transmembrane transporter binding"/>
    <property type="evidence" value="ECO:0000353"/>
    <property type="project" value="BHF-UCL"/>
</dbReference>
<dbReference type="GO" id="GO:0086003">
    <property type="term" value="P:cardiac muscle cell contraction"/>
    <property type="evidence" value="ECO:0000250"/>
    <property type="project" value="BHF-UCL"/>
</dbReference>
<dbReference type="GO" id="GO:0071277">
    <property type="term" value="P:cellular response to calcium ion"/>
    <property type="evidence" value="ECO:0000304"/>
    <property type="project" value="BHF-UCL"/>
</dbReference>
<dbReference type="GO" id="GO:0032469">
    <property type="term" value="P:endoplasmic reticulum calcium ion homeostasis"/>
    <property type="evidence" value="ECO:0000250"/>
    <property type="project" value="BHF-UCL"/>
</dbReference>
<dbReference type="GO" id="GO:0060291">
    <property type="term" value="P:long-term synaptic potentiation"/>
    <property type="evidence" value="ECO:0000304"/>
    <property type="project" value="BHF-UCL"/>
</dbReference>
<dbReference type="GO" id="GO:1902306">
    <property type="term" value="P:negative regulation of sodium ion transmembrane transport"/>
    <property type="evidence" value="ECO:0000314"/>
    <property type="project" value="BHF-UCL"/>
</dbReference>
<dbReference type="GO" id="GO:0010666">
    <property type="term" value="P:positive regulation of cardiac muscle cell apoptotic process"/>
    <property type="evidence" value="ECO:0000250"/>
    <property type="project" value="BHF-UCL"/>
</dbReference>
<dbReference type="GO" id="GO:0010613">
    <property type="term" value="P:positive regulation of cardiac muscle hypertrophy"/>
    <property type="evidence" value="ECO:0000315"/>
    <property type="project" value="UniProtKB"/>
</dbReference>
<dbReference type="GO" id="GO:0006468">
    <property type="term" value="P:protein phosphorylation"/>
    <property type="evidence" value="ECO:0000314"/>
    <property type="project" value="UniProtKB"/>
</dbReference>
<dbReference type="GO" id="GO:1902514">
    <property type="term" value="P:regulation of calcium ion transmembrane transport via high voltage-gated calcium channel"/>
    <property type="evidence" value="ECO:0000250"/>
    <property type="project" value="BHF-UCL"/>
</dbReference>
<dbReference type="GO" id="GO:0098901">
    <property type="term" value="P:regulation of cardiac muscle cell action potential"/>
    <property type="evidence" value="ECO:0000250"/>
    <property type="project" value="BHF-UCL"/>
</dbReference>
<dbReference type="GO" id="GO:0098909">
    <property type="term" value="P:regulation of cardiac muscle cell action potential involved in regulation of contraction"/>
    <property type="evidence" value="ECO:0000305"/>
    <property type="project" value="BHF-UCL"/>
</dbReference>
<dbReference type="GO" id="GO:0010881">
    <property type="term" value="P:regulation of cardiac muscle contraction by regulation of the release of sequestered calcium ion"/>
    <property type="evidence" value="ECO:0000304"/>
    <property type="project" value="UniProtKB"/>
</dbReference>
<dbReference type="GO" id="GO:0010649">
    <property type="term" value="P:regulation of cell communication by electrical coupling"/>
    <property type="evidence" value="ECO:0000250"/>
    <property type="project" value="BHF-UCL"/>
</dbReference>
<dbReference type="GO" id="GO:1901844">
    <property type="term" value="P:regulation of cell communication by electrical coupling involved in cardiac conduction"/>
    <property type="evidence" value="ECO:0000305"/>
    <property type="project" value="BHF-UCL"/>
</dbReference>
<dbReference type="GO" id="GO:0001558">
    <property type="term" value="P:regulation of cell growth"/>
    <property type="evidence" value="ECO:0000303"/>
    <property type="project" value="UniProtKB"/>
</dbReference>
<dbReference type="GO" id="GO:0060341">
    <property type="term" value="P:regulation of cellular localization"/>
    <property type="evidence" value="ECO:0000315"/>
    <property type="project" value="UniProtKB"/>
</dbReference>
<dbReference type="GO" id="GO:0008016">
    <property type="term" value="P:regulation of heart contraction"/>
    <property type="evidence" value="ECO:0000304"/>
    <property type="project" value="UniProtKB"/>
</dbReference>
<dbReference type="GO" id="GO:0086091">
    <property type="term" value="P:regulation of heart rate by cardiac conduction"/>
    <property type="evidence" value="ECO:0000305"/>
    <property type="project" value="BHF-UCL"/>
</dbReference>
<dbReference type="GO" id="GO:0003254">
    <property type="term" value="P:regulation of membrane depolarization"/>
    <property type="evidence" value="ECO:0000314"/>
    <property type="project" value="BHF-UCL"/>
</dbReference>
<dbReference type="GO" id="GO:0048168">
    <property type="term" value="P:regulation of neuronal synaptic plasticity"/>
    <property type="evidence" value="ECO:0000318"/>
    <property type="project" value="GO_Central"/>
</dbReference>
<dbReference type="GO" id="GO:1903076">
    <property type="term" value="P:regulation of protein localization to plasma membrane"/>
    <property type="evidence" value="ECO:0000318"/>
    <property type="project" value="GO_Central"/>
</dbReference>
<dbReference type="GO" id="GO:1901897">
    <property type="term" value="P:regulation of relaxation of cardiac muscle"/>
    <property type="evidence" value="ECO:0000314"/>
    <property type="project" value="BHF-UCL"/>
</dbReference>
<dbReference type="GO" id="GO:0010880">
    <property type="term" value="P:regulation of release of sequestered calcium ion into cytosol by sarcoplasmic reticulum"/>
    <property type="evidence" value="ECO:0000250"/>
    <property type="project" value="BHF-UCL"/>
</dbReference>
<dbReference type="GO" id="GO:0060314">
    <property type="term" value="P:regulation of ryanodine-sensitive calcium-release channel activity"/>
    <property type="evidence" value="ECO:0000304"/>
    <property type="project" value="UniProtKB"/>
</dbReference>
<dbReference type="GO" id="GO:0002026">
    <property type="term" value="P:regulation of the force of heart contraction"/>
    <property type="evidence" value="ECO:0000304"/>
    <property type="project" value="BHF-UCL"/>
</dbReference>
<dbReference type="GO" id="GO:0006357">
    <property type="term" value="P:regulation of transcription by RNA polymerase II"/>
    <property type="evidence" value="ECO:0000304"/>
    <property type="project" value="BHF-UCL"/>
</dbReference>
<dbReference type="GO" id="GO:0055119">
    <property type="term" value="P:relaxation of cardiac muscle"/>
    <property type="evidence" value="ECO:0000250"/>
    <property type="project" value="BHF-UCL"/>
</dbReference>
<dbReference type="CDD" id="cd14086">
    <property type="entry name" value="STKc_CaMKII"/>
    <property type="match status" value="1"/>
</dbReference>
<dbReference type="FunFam" id="1.10.510.10:FF:000001">
    <property type="entry name" value="Calcium/calmodulin-dependent protein kinase type II subunit delta"/>
    <property type="match status" value="1"/>
</dbReference>
<dbReference type="FunFam" id="3.30.200.20:FF:000002">
    <property type="entry name" value="Calcium/calmodulin-dependent protein kinase type II subunit delta isoform 2"/>
    <property type="match status" value="1"/>
</dbReference>
<dbReference type="FunFam" id="3.10.450.50:FF:000001">
    <property type="entry name" value="calcium/calmodulin-dependent protein kinase type II subunit gamma isoform X1"/>
    <property type="match status" value="1"/>
</dbReference>
<dbReference type="Gene3D" id="3.10.450.50">
    <property type="match status" value="1"/>
</dbReference>
<dbReference type="Gene3D" id="6.10.140.620">
    <property type="match status" value="1"/>
</dbReference>
<dbReference type="Gene3D" id="3.30.200.20">
    <property type="entry name" value="Phosphorylase Kinase, domain 1"/>
    <property type="match status" value="1"/>
</dbReference>
<dbReference type="Gene3D" id="1.10.510.10">
    <property type="entry name" value="Transferase(Phosphotransferase) domain 1"/>
    <property type="match status" value="1"/>
</dbReference>
<dbReference type="InterPro" id="IPR013543">
    <property type="entry name" value="Ca/CaM-dep_prot_kinase-assoc"/>
</dbReference>
<dbReference type="InterPro" id="IPR011009">
    <property type="entry name" value="Kinase-like_dom_sf"/>
</dbReference>
<dbReference type="InterPro" id="IPR032710">
    <property type="entry name" value="NTF2-like_dom_sf"/>
</dbReference>
<dbReference type="InterPro" id="IPR000719">
    <property type="entry name" value="Prot_kinase_dom"/>
</dbReference>
<dbReference type="InterPro" id="IPR017441">
    <property type="entry name" value="Protein_kinase_ATP_BS"/>
</dbReference>
<dbReference type="InterPro" id="IPR008271">
    <property type="entry name" value="Ser/Thr_kinase_AS"/>
</dbReference>
<dbReference type="PANTHER" id="PTHR24347">
    <property type="entry name" value="SERINE/THREONINE-PROTEIN KINASE"/>
    <property type="match status" value="1"/>
</dbReference>
<dbReference type="Pfam" id="PF08332">
    <property type="entry name" value="CaMKII_AD"/>
    <property type="match status" value="1"/>
</dbReference>
<dbReference type="Pfam" id="PF00069">
    <property type="entry name" value="Pkinase"/>
    <property type="match status" value="1"/>
</dbReference>
<dbReference type="SMART" id="SM00220">
    <property type="entry name" value="S_TKc"/>
    <property type="match status" value="1"/>
</dbReference>
<dbReference type="SUPFAM" id="SSF54427">
    <property type="entry name" value="NTF2-like"/>
    <property type="match status" value="1"/>
</dbReference>
<dbReference type="SUPFAM" id="SSF56112">
    <property type="entry name" value="Protein kinase-like (PK-like)"/>
    <property type="match status" value="1"/>
</dbReference>
<dbReference type="PROSITE" id="PS00107">
    <property type="entry name" value="PROTEIN_KINASE_ATP"/>
    <property type="match status" value="1"/>
</dbReference>
<dbReference type="PROSITE" id="PS50011">
    <property type="entry name" value="PROTEIN_KINASE_DOM"/>
    <property type="match status" value="1"/>
</dbReference>
<dbReference type="PROSITE" id="PS00108">
    <property type="entry name" value="PROTEIN_KINASE_ST"/>
    <property type="match status" value="1"/>
</dbReference>